<gene>
    <name evidence="1" type="primary">yabA</name>
    <name type="ordered locus">SAV0486</name>
</gene>
<organism>
    <name type="scientific">Staphylococcus aureus (strain Mu50 / ATCC 700699)</name>
    <dbReference type="NCBI Taxonomy" id="158878"/>
    <lineage>
        <taxon>Bacteria</taxon>
        <taxon>Bacillati</taxon>
        <taxon>Bacillota</taxon>
        <taxon>Bacilli</taxon>
        <taxon>Bacillales</taxon>
        <taxon>Staphylococcaceae</taxon>
        <taxon>Staphylococcus</taxon>
    </lineage>
</organism>
<accession>Q99WB7</accession>
<protein>
    <recommendedName>
        <fullName evidence="1">Replication initiation control protein YabA</fullName>
    </recommendedName>
</protein>
<proteinExistence type="inferred from homology"/>
<dbReference type="EMBL" id="BA000017">
    <property type="protein sequence ID" value="BAB56648.1"/>
    <property type="status" value="ALT_INIT"/>
    <property type="molecule type" value="Genomic_DNA"/>
</dbReference>
<dbReference type="RefSeq" id="WP_000375683.1">
    <property type="nucleotide sequence ID" value="NC_002758.2"/>
</dbReference>
<dbReference type="SMR" id="Q99WB7"/>
<dbReference type="DNASU" id="1120446"/>
<dbReference type="KEGG" id="sav:SAV0486"/>
<dbReference type="HOGENOM" id="CLU_157169_0_0_9"/>
<dbReference type="Proteomes" id="UP000002481">
    <property type="component" value="Chromosome"/>
</dbReference>
<dbReference type="GO" id="GO:0009295">
    <property type="term" value="C:nucleoid"/>
    <property type="evidence" value="ECO:0007669"/>
    <property type="project" value="UniProtKB-SubCell"/>
</dbReference>
<dbReference type="GO" id="GO:0006260">
    <property type="term" value="P:DNA replication"/>
    <property type="evidence" value="ECO:0007669"/>
    <property type="project" value="UniProtKB-UniRule"/>
</dbReference>
<dbReference type="HAMAP" id="MF_01159">
    <property type="entry name" value="YabA"/>
    <property type="match status" value="1"/>
</dbReference>
<dbReference type="InterPro" id="IPR010377">
    <property type="entry name" value="YabA"/>
</dbReference>
<dbReference type="NCBIfam" id="NF009641">
    <property type="entry name" value="PRK13169.1-2"/>
    <property type="match status" value="1"/>
</dbReference>
<dbReference type="Pfam" id="PF06156">
    <property type="entry name" value="YabA"/>
    <property type="match status" value="1"/>
</dbReference>
<dbReference type="PIRSF" id="PIRSF021439">
    <property type="entry name" value="DUF972"/>
    <property type="match status" value="1"/>
</dbReference>
<feature type="chain" id="PRO_0000211916" description="Replication initiation control protein YabA">
    <location>
        <begin position="1"/>
        <end position="115"/>
    </location>
</feature>
<feature type="binding site" evidence="1">
    <location>
        <position position="90"/>
    </location>
    <ligand>
        <name>Zn(2+)</name>
        <dbReference type="ChEBI" id="CHEBI:29105"/>
    </ligand>
</feature>
<feature type="binding site" evidence="1">
    <location>
        <position position="92"/>
    </location>
    <ligand>
        <name>Zn(2+)</name>
        <dbReference type="ChEBI" id="CHEBI:29105"/>
    </ligand>
</feature>
<feature type="binding site" evidence="1">
    <location>
        <position position="106"/>
    </location>
    <ligand>
        <name>Zn(2+)</name>
        <dbReference type="ChEBI" id="CHEBI:29105"/>
    </ligand>
</feature>
<feature type="binding site" evidence="1">
    <location>
        <position position="109"/>
    </location>
    <ligand>
        <name>Zn(2+)</name>
        <dbReference type="ChEBI" id="CHEBI:29105"/>
    </ligand>
</feature>
<keyword id="KW-0963">Cytoplasm</keyword>
<keyword id="KW-0235">DNA replication</keyword>
<keyword id="KW-0236">DNA replication inhibitor</keyword>
<keyword id="KW-0479">Metal-binding</keyword>
<keyword id="KW-0862">Zinc</keyword>
<sequence length="115" mass="12950">MDRNEIFEKIMRLEMNVNQLSKETSELKAHAVELVEENVALQLENDNLKKVLGNDEPTTIDTANSKPAKAVKKPLPSKDNLAILYGEGFHICKGELFGKHRHGEDCLFCLEVLSD</sequence>
<comment type="function">
    <text evidence="1">Involved in control of chromosome replication initiation. Inhibits the cooperative binding of DnaA to the oriC region, thus negatively regulating initiation of chromosome replication. Inhibits the ability of DnaA-ATP to form a helix on DNA; does not disassemble preformed DnaA-DNA helices. Decreases the residence time of DnaA on the chromosome at its binding sites (oriC, replication forks and promoter-binding sites). Tethers DnaA to the replication machinery via the DNA polymerase beta sliding clamp subunit (dnaN). Associates with oriC and other DnaA targets on the chromosome in a DnaA-dependent manner.</text>
</comment>
<comment type="cofactor">
    <cofactor evidence="1">
        <name>Zn(2+)</name>
        <dbReference type="ChEBI" id="CHEBI:29105"/>
    </cofactor>
    <text evidence="1">Binds 1 zinc ion per subunit.</text>
</comment>
<comment type="subunit">
    <text evidence="1">Homotetramer. Interacts with both DnaA and DnaN, acting as a bridge between these two proteins.</text>
</comment>
<comment type="subcellular location">
    <subcellularLocation>
        <location evidence="1">Cytoplasm</location>
        <location evidence="1">Nucleoid</location>
    </subcellularLocation>
    <text evidence="1">Localizes in tight foci, which correspond to the replisome at mid-cell throughout the cell cycle.</text>
</comment>
<comment type="similarity">
    <text evidence="1">Belongs to the YabA family.</text>
</comment>
<comment type="sequence caution" evidence="2">
    <conflict type="erroneous initiation">
        <sequence resource="EMBL-CDS" id="BAB56648"/>
    </conflict>
</comment>
<name>YABA_STAAM</name>
<evidence type="ECO:0000255" key="1">
    <source>
        <dbReference type="HAMAP-Rule" id="MF_01159"/>
    </source>
</evidence>
<evidence type="ECO:0000305" key="2"/>
<reference key="1">
    <citation type="journal article" date="2001" name="Lancet">
        <title>Whole genome sequencing of meticillin-resistant Staphylococcus aureus.</title>
        <authorList>
            <person name="Kuroda M."/>
            <person name="Ohta T."/>
            <person name="Uchiyama I."/>
            <person name="Baba T."/>
            <person name="Yuzawa H."/>
            <person name="Kobayashi I."/>
            <person name="Cui L."/>
            <person name="Oguchi A."/>
            <person name="Aoki K."/>
            <person name="Nagai Y."/>
            <person name="Lian J.-Q."/>
            <person name="Ito T."/>
            <person name="Kanamori M."/>
            <person name="Matsumaru H."/>
            <person name="Maruyama A."/>
            <person name="Murakami H."/>
            <person name="Hosoyama A."/>
            <person name="Mizutani-Ui Y."/>
            <person name="Takahashi N.K."/>
            <person name="Sawano T."/>
            <person name="Inoue R."/>
            <person name="Kaito C."/>
            <person name="Sekimizu K."/>
            <person name="Hirakawa H."/>
            <person name="Kuhara S."/>
            <person name="Goto S."/>
            <person name="Yabuzaki J."/>
            <person name="Kanehisa M."/>
            <person name="Yamashita A."/>
            <person name="Oshima K."/>
            <person name="Furuya K."/>
            <person name="Yoshino C."/>
            <person name="Shiba T."/>
            <person name="Hattori M."/>
            <person name="Ogasawara N."/>
            <person name="Hayashi H."/>
            <person name="Hiramatsu K."/>
        </authorList>
    </citation>
    <scope>NUCLEOTIDE SEQUENCE [LARGE SCALE GENOMIC DNA]</scope>
    <source>
        <strain>Mu50 / ATCC 700699</strain>
    </source>
</reference>